<gene>
    <name evidence="1" type="primary">cysS</name>
    <name type="ordered locus">Bamb_2113</name>
</gene>
<sequence>MESLRIYNTLARDKQVFVPRQSGEVRMYVCGITVYDYCHVGHARMLVVFDLVQRWLRAIGYRVTYVRNITDIEDKIIRRAVENGETIKSLTDRFIGAMHEDEAALGIQRPDLEPRATQFIPQMLGMIEKLETNGYAYQAADGDVNYSVRKFANYGKLSGKSLDDLRAGERVAANDAKEDPLDFVLWKRAKADDPPGATWASKYGMGRPGWHIECSAMGCTLLGEHFDIHGGGQDLQFPHHENEIAQSEGATGQTFVNYWMHNGFVQVDNEKMSKSLGNFFTIREVLERYDAEVMRFFIVRTHYRSPLNYSDVHLDDARASLTRLYTALKDVEPDALALDWNEPHAQRFAAAMNDDINTPVAVATLFELAGEINRTRDASLARQLKQLAGLLGLLGREPRAFLQQATGAAQAGGLAADEIEAKIAARVAAKQAKDYAEADRIRAELLDAGIALEDKPGGSTEWRRV</sequence>
<dbReference type="EC" id="6.1.1.16" evidence="1"/>
<dbReference type="EMBL" id="CP000440">
    <property type="protein sequence ID" value="ABI87669.1"/>
    <property type="molecule type" value="Genomic_DNA"/>
</dbReference>
<dbReference type="RefSeq" id="WP_011657338.1">
    <property type="nucleotide sequence ID" value="NZ_CP009798.1"/>
</dbReference>
<dbReference type="SMR" id="Q0BDV4"/>
<dbReference type="GeneID" id="93085681"/>
<dbReference type="KEGG" id="bam:Bamb_2113"/>
<dbReference type="PATRIC" id="fig|339670.21.peg.2823"/>
<dbReference type="eggNOG" id="COG0215">
    <property type="taxonomic scope" value="Bacteria"/>
</dbReference>
<dbReference type="Proteomes" id="UP000000662">
    <property type="component" value="Chromosome 1"/>
</dbReference>
<dbReference type="GO" id="GO:0005829">
    <property type="term" value="C:cytosol"/>
    <property type="evidence" value="ECO:0007669"/>
    <property type="project" value="TreeGrafter"/>
</dbReference>
<dbReference type="GO" id="GO:0005524">
    <property type="term" value="F:ATP binding"/>
    <property type="evidence" value="ECO:0007669"/>
    <property type="project" value="UniProtKB-UniRule"/>
</dbReference>
<dbReference type="GO" id="GO:0004817">
    <property type="term" value="F:cysteine-tRNA ligase activity"/>
    <property type="evidence" value="ECO:0007669"/>
    <property type="project" value="UniProtKB-UniRule"/>
</dbReference>
<dbReference type="GO" id="GO:0008270">
    <property type="term" value="F:zinc ion binding"/>
    <property type="evidence" value="ECO:0007669"/>
    <property type="project" value="UniProtKB-UniRule"/>
</dbReference>
<dbReference type="GO" id="GO:0006423">
    <property type="term" value="P:cysteinyl-tRNA aminoacylation"/>
    <property type="evidence" value="ECO:0007669"/>
    <property type="project" value="UniProtKB-UniRule"/>
</dbReference>
<dbReference type="CDD" id="cd07963">
    <property type="entry name" value="Anticodon_Ia_Cys"/>
    <property type="match status" value="1"/>
</dbReference>
<dbReference type="CDD" id="cd00672">
    <property type="entry name" value="CysRS_core"/>
    <property type="match status" value="1"/>
</dbReference>
<dbReference type="FunFam" id="3.40.50.620:FF:000009">
    <property type="entry name" value="Cysteine--tRNA ligase"/>
    <property type="match status" value="1"/>
</dbReference>
<dbReference type="Gene3D" id="1.20.120.1910">
    <property type="entry name" value="Cysteine-tRNA ligase, C-terminal anti-codon recognition domain"/>
    <property type="match status" value="1"/>
</dbReference>
<dbReference type="Gene3D" id="3.40.50.620">
    <property type="entry name" value="HUPs"/>
    <property type="match status" value="1"/>
</dbReference>
<dbReference type="HAMAP" id="MF_00041">
    <property type="entry name" value="Cys_tRNA_synth"/>
    <property type="match status" value="1"/>
</dbReference>
<dbReference type="InterPro" id="IPR015803">
    <property type="entry name" value="Cys-tRNA-ligase"/>
</dbReference>
<dbReference type="InterPro" id="IPR015273">
    <property type="entry name" value="Cys-tRNA-synt_Ia_DALR"/>
</dbReference>
<dbReference type="InterPro" id="IPR024909">
    <property type="entry name" value="Cys-tRNA/MSH_ligase"/>
</dbReference>
<dbReference type="InterPro" id="IPR014729">
    <property type="entry name" value="Rossmann-like_a/b/a_fold"/>
</dbReference>
<dbReference type="InterPro" id="IPR032678">
    <property type="entry name" value="tRNA-synt_1_cat_dom"/>
</dbReference>
<dbReference type="InterPro" id="IPR009080">
    <property type="entry name" value="tRNAsynth_Ia_anticodon-bd"/>
</dbReference>
<dbReference type="NCBIfam" id="TIGR00435">
    <property type="entry name" value="cysS"/>
    <property type="match status" value="1"/>
</dbReference>
<dbReference type="PANTHER" id="PTHR10890:SF3">
    <property type="entry name" value="CYSTEINE--TRNA LIGASE, CYTOPLASMIC"/>
    <property type="match status" value="1"/>
</dbReference>
<dbReference type="PANTHER" id="PTHR10890">
    <property type="entry name" value="CYSTEINYL-TRNA SYNTHETASE"/>
    <property type="match status" value="1"/>
</dbReference>
<dbReference type="Pfam" id="PF09190">
    <property type="entry name" value="DALR_2"/>
    <property type="match status" value="1"/>
</dbReference>
<dbReference type="Pfam" id="PF01406">
    <property type="entry name" value="tRNA-synt_1e"/>
    <property type="match status" value="1"/>
</dbReference>
<dbReference type="PRINTS" id="PR00983">
    <property type="entry name" value="TRNASYNTHCYS"/>
</dbReference>
<dbReference type="SMART" id="SM00840">
    <property type="entry name" value="DALR_2"/>
    <property type="match status" value="1"/>
</dbReference>
<dbReference type="SUPFAM" id="SSF47323">
    <property type="entry name" value="Anticodon-binding domain of a subclass of class I aminoacyl-tRNA synthetases"/>
    <property type="match status" value="1"/>
</dbReference>
<dbReference type="SUPFAM" id="SSF52374">
    <property type="entry name" value="Nucleotidylyl transferase"/>
    <property type="match status" value="1"/>
</dbReference>
<evidence type="ECO:0000255" key="1">
    <source>
        <dbReference type="HAMAP-Rule" id="MF_00041"/>
    </source>
</evidence>
<proteinExistence type="inferred from homology"/>
<comment type="catalytic activity">
    <reaction evidence="1">
        <text>tRNA(Cys) + L-cysteine + ATP = L-cysteinyl-tRNA(Cys) + AMP + diphosphate</text>
        <dbReference type="Rhea" id="RHEA:17773"/>
        <dbReference type="Rhea" id="RHEA-COMP:9661"/>
        <dbReference type="Rhea" id="RHEA-COMP:9679"/>
        <dbReference type="ChEBI" id="CHEBI:30616"/>
        <dbReference type="ChEBI" id="CHEBI:33019"/>
        <dbReference type="ChEBI" id="CHEBI:35235"/>
        <dbReference type="ChEBI" id="CHEBI:78442"/>
        <dbReference type="ChEBI" id="CHEBI:78517"/>
        <dbReference type="ChEBI" id="CHEBI:456215"/>
        <dbReference type="EC" id="6.1.1.16"/>
    </reaction>
</comment>
<comment type="cofactor">
    <cofactor evidence="1">
        <name>Zn(2+)</name>
        <dbReference type="ChEBI" id="CHEBI:29105"/>
    </cofactor>
    <text evidence="1">Binds 1 zinc ion per subunit.</text>
</comment>
<comment type="subunit">
    <text evidence="1">Monomer.</text>
</comment>
<comment type="subcellular location">
    <subcellularLocation>
        <location evidence="1">Cytoplasm</location>
    </subcellularLocation>
</comment>
<comment type="similarity">
    <text evidence="1">Belongs to the class-I aminoacyl-tRNA synthetase family.</text>
</comment>
<feature type="chain" id="PRO_1000006567" description="Cysteine--tRNA ligase">
    <location>
        <begin position="1"/>
        <end position="465"/>
    </location>
</feature>
<feature type="short sequence motif" description="'HIGH' region">
    <location>
        <begin position="32"/>
        <end position="42"/>
    </location>
</feature>
<feature type="short sequence motif" description="'KMSKS' region">
    <location>
        <begin position="271"/>
        <end position="275"/>
    </location>
</feature>
<feature type="binding site" evidence="1">
    <location>
        <position position="30"/>
    </location>
    <ligand>
        <name>Zn(2+)</name>
        <dbReference type="ChEBI" id="CHEBI:29105"/>
    </ligand>
</feature>
<feature type="binding site" evidence="1">
    <location>
        <position position="214"/>
    </location>
    <ligand>
        <name>Zn(2+)</name>
        <dbReference type="ChEBI" id="CHEBI:29105"/>
    </ligand>
</feature>
<feature type="binding site" evidence="1">
    <location>
        <position position="239"/>
    </location>
    <ligand>
        <name>Zn(2+)</name>
        <dbReference type="ChEBI" id="CHEBI:29105"/>
    </ligand>
</feature>
<feature type="binding site" evidence="1">
    <location>
        <position position="243"/>
    </location>
    <ligand>
        <name>Zn(2+)</name>
        <dbReference type="ChEBI" id="CHEBI:29105"/>
    </ligand>
</feature>
<feature type="binding site" evidence="1">
    <location>
        <position position="274"/>
    </location>
    <ligand>
        <name>ATP</name>
        <dbReference type="ChEBI" id="CHEBI:30616"/>
    </ligand>
</feature>
<accession>Q0BDV4</accession>
<reference key="1">
    <citation type="submission" date="2006-08" db="EMBL/GenBank/DDBJ databases">
        <title>Complete sequence of chromosome 1 of Burkholderia cepacia AMMD.</title>
        <authorList>
            <person name="Copeland A."/>
            <person name="Lucas S."/>
            <person name="Lapidus A."/>
            <person name="Barry K."/>
            <person name="Detter J.C."/>
            <person name="Glavina del Rio T."/>
            <person name="Hammon N."/>
            <person name="Israni S."/>
            <person name="Pitluck S."/>
            <person name="Bruce D."/>
            <person name="Chain P."/>
            <person name="Malfatti S."/>
            <person name="Shin M."/>
            <person name="Vergez L."/>
            <person name="Schmutz J."/>
            <person name="Larimer F."/>
            <person name="Land M."/>
            <person name="Hauser L."/>
            <person name="Kyrpides N."/>
            <person name="Kim E."/>
            <person name="Parke J."/>
            <person name="Coenye T."/>
            <person name="Konstantinidis K."/>
            <person name="Ramette A."/>
            <person name="Tiedje J."/>
            <person name="Richardson P."/>
        </authorList>
    </citation>
    <scope>NUCLEOTIDE SEQUENCE [LARGE SCALE GENOMIC DNA]</scope>
    <source>
        <strain>ATCC BAA-244 / DSM 16087 / CCUG 44356 / LMG 19182 / AMMD</strain>
    </source>
</reference>
<keyword id="KW-0030">Aminoacyl-tRNA synthetase</keyword>
<keyword id="KW-0067">ATP-binding</keyword>
<keyword id="KW-0963">Cytoplasm</keyword>
<keyword id="KW-0436">Ligase</keyword>
<keyword id="KW-0479">Metal-binding</keyword>
<keyword id="KW-0547">Nucleotide-binding</keyword>
<keyword id="KW-0648">Protein biosynthesis</keyword>
<keyword id="KW-0862">Zinc</keyword>
<protein>
    <recommendedName>
        <fullName evidence="1">Cysteine--tRNA ligase</fullName>
        <ecNumber evidence="1">6.1.1.16</ecNumber>
    </recommendedName>
    <alternativeName>
        <fullName evidence="1">Cysteinyl-tRNA synthetase</fullName>
        <shortName evidence="1">CysRS</shortName>
    </alternativeName>
</protein>
<name>SYC_BURCM</name>
<organism>
    <name type="scientific">Burkholderia ambifaria (strain ATCC BAA-244 / DSM 16087 / CCUG 44356 / LMG 19182 / AMMD)</name>
    <name type="common">Burkholderia cepacia (strain AMMD)</name>
    <dbReference type="NCBI Taxonomy" id="339670"/>
    <lineage>
        <taxon>Bacteria</taxon>
        <taxon>Pseudomonadati</taxon>
        <taxon>Pseudomonadota</taxon>
        <taxon>Betaproteobacteria</taxon>
        <taxon>Burkholderiales</taxon>
        <taxon>Burkholderiaceae</taxon>
        <taxon>Burkholderia</taxon>
        <taxon>Burkholderia cepacia complex</taxon>
    </lineage>
</organism>